<organism>
    <name type="scientific">Geobacter sulfurreducens (strain ATCC 51573 / DSM 12127 / PCA)</name>
    <dbReference type="NCBI Taxonomy" id="243231"/>
    <lineage>
        <taxon>Bacteria</taxon>
        <taxon>Pseudomonadati</taxon>
        <taxon>Thermodesulfobacteriota</taxon>
        <taxon>Desulfuromonadia</taxon>
        <taxon>Geobacterales</taxon>
        <taxon>Geobacteraceae</taxon>
        <taxon>Geobacter</taxon>
    </lineage>
</organism>
<keyword id="KW-0328">Glycosyltransferase</keyword>
<keyword id="KW-1185">Reference proteome</keyword>
<keyword id="KW-0804">Transcription</keyword>
<keyword id="KW-0805">Transcription regulation</keyword>
<keyword id="KW-0808">Transferase</keyword>
<name>PYRR_GEOSL</name>
<sequence>MADGTVILDTAGVKRALTRIAHEILERNKGVDGLVLVGIRTGGVHLAREIVARLEEIEGATVPVGEVDITLYRDDFKGHAPHLPVGKTDIPFSLETKRVVLVDDVLFTGRTIRAAMDAIMDHGRPACIQLAVLVDRGHRELPIRADFVGRNVPTSLKEKIAVLFDAANRPTDVVLEK</sequence>
<accession>Q74DP6</accession>
<proteinExistence type="inferred from homology"/>
<gene>
    <name evidence="1" type="primary">pyrR</name>
    <name type="ordered locus">GSU1270</name>
</gene>
<evidence type="ECO:0000255" key="1">
    <source>
        <dbReference type="HAMAP-Rule" id="MF_01219"/>
    </source>
</evidence>
<reference key="1">
    <citation type="journal article" date="2003" name="Science">
        <title>Genome of Geobacter sulfurreducens: metal reduction in subsurface environments.</title>
        <authorList>
            <person name="Methe B.A."/>
            <person name="Nelson K.E."/>
            <person name="Eisen J.A."/>
            <person name="Paulsen I.T."/>
            <person name="Nelson W.C."/>
            <person name="Heidelberg J.F."/>
            <person name="Wu D."/>
            <person name="Wu M."/>
            <person name="Ward N.L."/>
            <person name="Beanan M.J."/>
            <person name="Dodson R.J."/>
            <person name="Madupu R."/>
            <person name="Brinkac L.M."/>
            <person name="Daugherty S.C."/>
            <person name="DeBoy R.T."/>
            <person name="Durkin A.S."/>
            <person name="Gwinn M.L."/>
            <person name="Kolonay J.F."/>
            <person name="Sullivan S.A."/>
            <person name="Haft D.H."/>
            <person name="Selengut J."/>
            <person name="Davidsen T.M."/>
            <person name="Zafar N."/>
            <person name="White O."/>
            <person name="Tran B."/>
            <person name="Romero C."/>
            <person name="Forberger H.A."/>
            <person name="Weidman J.F."/>
            <person name="Khouri H.M."/>
            <person name="Feldblyum T.V."/>
            <person name="Utterback T.R."/>
            <person name="Van Aken S.E."/>
            <person name="Lovley D.R."/>
            <person name="Fraser C.M."/>
        </authorList>
    </citation>
    <scope>NUCLEOTIDE SEQUENCE [LARGE SCALE GENOMIC DNA]</scope>
    <source>
        <strain>ATCC 51573 / DSM 12127 / PCA</strain>
    </source>
</reference>
<dbReference type="EC" id="2.4.2.9" evidence="1"/>
<dbReference type="EMBL" id="AE017180">
    <property type="protein sequence ID" value="AAR34646.1"/>
    <property type="molecule type" value="Genomic_DNA"/>
</dbReference>
<dbReference type="RefSeq" id="NP_952323.1">
    <property type="nucleotide sequence ID" value="NC_002939.5"/>
</dbReference>
<dbReference type="RefSeq" id="WP_010941925.1">
    <property type="nucleotide sequence ID" value="NC_002939.5"/>
</dbReference>
<dbReference type="SMR" id="Q74DP6"/>
<dbReference type="STRING" id="243231.GSU1270"/>
<dbReference type="EnsemblBacteria" id="AAR34646">
    <property type="protein sequence ID" value="AAR34646"/>
    <property type="gene ID" value="GSU1270"/>
</dbReference>
<dbReference type="KEGG" id="gsu:GSU1270"/>
<dbReference type="PATRIC" id="fig|243231.5.peg.1265"/>
<dbReference type="eggNOG" id="COG2065">
    <property type="taxonomic scope" value="Bacteria"/>
</dbReference>
<dbReference type="HOGENOM" id="CLU_094234_2_1_7"/>
<dbReference type="InParanoid" id="Q74DP6"/>
<dbReference type="OrthoDB" id="9802227at2"/>
<dbReference type="Proteomes" id="UP000000577">
    <property type="component" value="Chromosome"/>
</dbReference>
<dbReference type="GO" id="GO:0004845">
    <property type="term" value="F:uracil phosphoribosyltransferase activity"/>
    <property type="evidence" value="ECO:0007669"/>
    <property type="project" value="UniProtKB-UniRule"/>
</dbReference>
<dbReference type="GO" id="GO:0006355">
    <property type="term" value="P:regulation of DNA-templated transcription"/>
    <property type="evidence" value="ECO:0007669"/>
    <property type="project" value="UniProtKB-UniRule"/>
</dbReference>
<dbReference type="CDD" id="cd06223">
    <property type="entry name" value="PRTases_typeI"/>
    <property type="match status" value="1"/>
</dbReference>
<dbReference type="FunFam" id="3.40.50.2020:FF:000020">
    <property type="entry name" value="Bifunctional protein PyrR"/>
    <property type="match status" value="1"/>
</dbReference>
<dbReference type="Gene3D" id="3.40.50.2020">
    <property type="match status" value="1"/>
</dbReference>
<dbReference type="HAMAP" id="MF_01219">
    <property type="entry name" value="PyrR"/>
    <property type="match status" value="1"/>
</dbReference>
<dbReference type="InterPro" id="IPR000836">
    <property type="entry name" value="PRibTrfase_dom"/>
</dbReference>
<dbReference type="InterPro" id="IPR029057">
    <property type="entry name" value="PRTase-like"/>
</dbReference>
<dbReference type="InterPro" id="IPR023050">
    <property type="entry name" value="PyrR"/>
</dbReference>
<dbReference type="InterPro" id="IPR050137">
    <property type="entry name" value="PyrR_bifunctional"/>
</dbReference>
<dbReference type="NCBIfam" id="NF003545">
    <property type="entry name" value="PRK05205.1-1"/>
    <property type="match status" value="1"/>
</dbReference>
<dbReference type="NCBIfam" id="NF003548">
    <property type="entry name" value="PRK05205.1-4"/>
    <property type="match status" value="1"/>
</dbReference>
<dbReference type="NCBIfam" id="NF003549">
    <property type="entry name" value="PRK05205.1-5"/>
    <property type="match status" value="1"/>
</dbReference>
<dbReference type="PANTHER" id="PTHR11608">
    <property type="entry name" value="BIFUNCTIONAL PROTEIN PYRR"/>
    <property type="match status" value="1"/>
</dbReference>
<dbReference type="PANTHER" id="PTHR11608:SF0">
    <property type="entry name" value="BIFUNCTIONAL PROTEIN PYRR"/>
    <property type="match status" value="1"/>
</dbReference>
<dbReference type="Pfam" id="PF00156">
    <property type="entry name" value="Pribosyltran"/>
    <property type="match status" value="1"/>
</dbReference>
<dbReference type="SUPFAM" id="SSF53271">
    <property type="entry name" value="PRTase-like"/>
    <property type="match status" value="1"/>
</dbReference>
<feature type="chain" id="PRO_1000085651" description="Bifunctional protein PyrR">
    <location>
        <begin position="1"/>
        <end position="177"/>
    </location>
</feature>
<feature type="short sequence motif" description="PRPP-binding" evidence="1">
    <location>
        <begin position="99"/>
        <end position="111"/>
    </location>
</feature>
<protein>
    <recommendedName>
        <fullName evidence="1">Bifunctional protein PyrR</fullName>
    </recommendedName>
    <domain>
        <recommendedName>
            <fullName evidence="1">Pyrimidine operon regulatory protein</fullName>
        </recommendedName>
    </domain>
    <domain>
        <recommendedName>
            <fullName evidence="1">Uracil phosphoribosyltransferase</fullName>
            <shortName evidence="1">UPRTase</shortName>
            <ecNumber evidence="1">2.4.2.9</ecNumber>
        </recommendedName>
    </domain>
</protein>
<comment type="function">
    <text evidence="1">Regulates the transcription of the pyrimidine nucleotide (pyr) operon in response to exogenous pyrimidines.</text>
</comment>
<comment type="function">
    <text evidence="1">Also displays a weak uracil phosphoribosyltransferase activity which is not physiologically significant.</text>
</comment>
<comment type="catalytic activity">
    <reaction evidence="1">
        <text>UMP + diphosphate = 5-phospho-alpha-D-ribose 1-diphosphate + uracil</text>
        <dbReference type="Rhea" id="RHEA:13017"/>
        <dbReference type="ChEBI" id="CHEBI:17568"/>
        <dbReference type="ChEBI" id="CHEBI:33019"/>
        <dbReference type="ChEBI" id="CHEBI:57865"/>
        <dbReference type="ChEBI" id="CHEBI:58017"/>
        <dbReference type="EC" id="2.4.2.9"/>
    </reaction>
</comment>
<comment type="similarity">
    <text evidence="1">Belongs to the purine/pyrimidine phosphoribosyltransferase family. PyrR subfamily.</text>
</comment>